<gene>
    <name type="ordered locus">YOR029W</name>
    <name type="ORF">O2663</name>
    <name type="ORF">OR26.19</name>
    <name type="ORF">YOL303.13</name>
</gene>
<dbReference type="EMBL" id="X87331">
    <property type="protein sequence ID" value="CAA60745.1"/>
    <property type="molecule type" value="Genomic_DNA"/>
</dbReference>
<dbReference type="EMBL" id="Z74937">
    <property type="protein sequence ID" value="CAA99219.1"/>
    <property type="molecule type" value="Genomic_DNA"/>
</dbReference>
<dbReference type="EMBL" id="BK006948">
    <property type="protein sequence ID" value="DAA80335.1"/>
    <property type="molecule type" value="Genomic_DNA"/>
</dbReference>
<dbReference type="PIR" id="S54635">
    <property type="entry name" value="S54635"/>
</dbReference>
<dbReference type="RefSeq" id="NP_001335815.1">
    <property type="nucleotide sequence ID" value="NM_001348877.1"/>
</dbReference>
<dbReference type="DIP" id="DIP-5760N"/>
<dbReference type="FunCoup" id="Q12243">
    <property type="interactions" value="37"/>
</dbReference>
<dbReference type="MINT" id="Q12243"/>
<dbReference type="STRING" id="4932.YOR029W"/>
<dbReference type="PaxDb" id="4932-YOR029W"/>
<dbReference type="EnsemblFungi" id="YOR029W_mRNA">
    <property type="protein sequence ID" value="YOR029W"/>
    <property type="gene ID" value="YOR029W"/>
</dbReference>
<dbReference type="GeneID" id="854194"/>
<dbReference type="AGR" id="SGD:S000005555"/>
<dbReference type="SGD" id="S000005555">
    <property type="gene designation" value="YOR029W"/>
</dbReference>
<dbReference type="HOGENOM" id="CLU_2160391_0_0_1"/>
<dbReference type="InParanoid" id="Q12243"/>
<dbReference type="PRO" id="PR:Q12243"/>
<dbReference type="Proteomes" id="UP000002311">
    <property type="component" value="Chromosome XV"/>
</dbReference>
<dbReference type="RNAct" id="Q12243">
    <property type="molecule type" value="protein"/>
</dbReference>
<organism>
    <name type="scientific">Saccharomyces cerevisiae (strain ATCC 204508 / S288c)</name>
    <name type="common">Baker's yeast</name>
    <dbReference type="NCBI Taxonomy" id="559292"/>
    <lineage>
        <taxon>Eukaryota</taxon>
        <taxon>Fungi</taxon>
        <taxon>Dikarya</taxon>
        <taxon>Ascomycota</taxon>
        <taxon>Saccharomycotina</taxon>
        <taxon>Saccharomycetes</taxon>
        <taxon>Saccharomycetales</taxon>
        <taxon>Saccharomycetaceae</taxon>
        <taxon>Saccharomyces</taxon>
    </lineage>
</organism>
<reference key="1">
    <citation type="journal article" date="1997" name="Nature">
        <title>The nucleotide sequence of Saccharomyces cerevisiae chromosome XV.</title>
        <authorList>
            <person name="Dujon B."/>
            <person name="Albermann K."/>
            <person name="Aldea M."/>
            <person name="Alexandraki D."/>
            <person name="Ansorge W."/>
            <person name="Arino J."/>
            <person name="Benes V."/>
            <person name="Bohn C."/>
            <person name="Bolotin-Fukuhara M."/>
            <person name="Bordonne R."/>
            <person name="Boyer J."/>
            <person name="Camasses A."/>
            <person name="Casamayor A."/>
            <person name="Casas C."/>
            <person name="Cheret G."/>
            <person name="Cziepluch C."/>
            <person name="Daignan-Fornier B."/>
            <person name="Dang V.-D."/>
            <person name="de Haan M."/>
            <person name="Delius H."/>
            <person name="Durand P."/>
            <person name="Fairhead C."/>
            <person name="Feldmann H."/>
            <person name="Gaillon L."/>
            <person name="Galisson F."/>
            <person name="Gamo F.-J."/>
            <person name="Gancedo C."/>
            <person name="Goffeau A."/>
            <person name="Goulding S.E."/>
            <person name="Grivell L.A."/>
            <person name="Habbig B."/>
            <person name="Hand N.J."/>
            <person name="Hani J."/>
            <person name="Hattenhorst U."/>
            <person name="Hebling U."/>
            <person name="Hernando Y."/>
            <person name="Herrero E."/>
            <person name="Heumann K."/>
            <person name="Hiesel R."/>
            <person name="Hilger F."/>
            <person name="Hofmann B."/>
            <person name="Hollenberg C.P."/>
            <person name="Hughes B."/>
            <person name="Jauniaux J.-C."/>
            <person name="Kalogeropoulos A."/>
            <person name="Katsoulou C."/>
            <person name="Kordes E."/>
            <person name="Lafuente M.J."/>
            <person name="Landt O."/>
            <person name="Louis E.J."/>
            <person name="Maarse A.C."/>
            <person name="Madania A."/>
            <person name="Mannhaupt G."/>
            <person name="Marck C."/>
            <person name="Martin R.P."/>
            <person name="Mewes H.-W."/>
            <person name="Michaux G."/>
            <person name="Paces V."/>
            <person name="Parle-McDermott A.G."/>
            <person name="Pearson B.M."/>
            <person name="Perrin A."/>
            <person name="Pettersson B."/>
            <person name="Poch O."/>
            <person name="Pohl T.M."/>
            <person name="Poirey R."/>
            <person name="Portetelle D."/>
            <person name="Pujol A."/>
            <person name="Purnelle B."/>
            <person name="Ramezani Rad M."/>
            <person name="Rechmann S."/>
            <person name="Schwager C."/>
            <person name="Schweizer M."/>
            <person name="Sor F."/>
            <person name="Sterky F."/>
            <person name="Tarassov I.A."/>
            <person name="Teodoru C."/>
            <person name="Tettelin H."/>
            <person name="Thierry A."/>
            <person name="Tobiasch E."/>
            <person name="Tzermia M."/>
            <person name="Uhlen M."/>
            <person name="Unseld M."/>
            <person name="Valens M."/>
            <person name="Vandenbol M."/>
            <person name="Vetter I."/>
            <person name="Vlcek C."/>
            <person name="Voet M."/>
            <person name="Volckaert G."/>
            <person name="Voss H."/>
            <person name="Wambutt R."/>
            <person name="Wedler H."/>
            <person name="Wiemann S."/>
            <person name="Winsor B."/>
            <person name="Wolfe K.H."/>
            <person name="Zollner A."/>
            <person name="Zumstein E."/>
            <person name="Kleine K."/>
        </authorList>
    </citation>
    <scope>NUCLEOTIDE SEQUENCE [LARGE SCALE GENOMIC DNA]</scope>
    <source>
        <strain>ATCC 204508 / S288c</strain>
    </source>
</reference>
<reference key="2">
    <citation type="journal article" date="2014" name="G3 (Bethesda)">
        <title>The reference genome sequence of Saccharomyces cerevisiae: Then and now.</title>
        <authorList>
            <person name="Engel S.R."/>
            <person name="Dietrich F.S."/>
            <person name="Fisk D.G."/>
            <person name="Binkley G."/>
            <person name="Balakrishnan R."/>
            <person name="Costanzo M.C."/>
            <person name="Dwight S.S."/>
            <person name="Hitz B.C."/>
            <person name="Karra K."/>
            <person name="Nash R.S."/>
            <person name="Weng S."/>
            <person name="Wong E.D."/>
            <person name="Lloyd P."/>
            <person name="Skrzypek M.S."/>
            <person name="Miyasato S.R."/>
            <person name="Simison M."/>
            <person name="Cherry J.M."/>
        </authorList>
    </citation>
    <scope>GENOME REANNOTATION</scope>
    <source>
        <strain>ATCC 204508 / S288c</strain>
    </source>
</reference>
<name>YOR29_YEAST</name>
<feature type="chain" id="PRO_0000299704" description="Uncharacterized protein YOR029W">
    <location>
        <begin position="1"/>
        <end position="111"/>
    </location>
</feature>
<keyword id="KW-1185">Reference proteome</keyword>
<sequence>MMQTSTSSRVRRYPYQITLSLVLKGFYSPSAPSYDFCLVLLPTLFLIDLMPIKFSLHVTIGIGEATPVPIFFFSAPWYFRSGNPLPHCVRAYRCKVNFPFFRLGWSTWLHY</sequence>
<proteinExistence type="predicted"/>
<protein>
    <recommendedName>
        <fullName>Uncharacterized protein YOR029W</fullName>
    </recommendedName>
</protein>
<accession>Q12243</accession>
<accession>A0A1S0T0B9</accession>